<keyword id="KW-0002">3D-structure</keyword>
<keyword id="KW-1283">Bacterial microcompartment</keyword>
<keyword id="KW-0846">Cobalamin</keyword>
<keyword id="KW-0170">Cobalt</keyword>
<keyword id="KW-1015">Disulfide bond</keyword>
<keyword id="KW-0479">Metal-binding</keyword>
<keyword id="KW-1185">Reference proteome</keyword>
<comment type="function">
    <text evidence="2 3 7 8 9">A component of the bacterial microcompartment (BMC) shell dedicated to ethanolamine degradation. May be involved in cofactor diffusion across the BMC (Probable). Cobalamin is covalently bound to 1 subunit of the trimer on the concave (lumenal) face in a closed pore conformation; whether this is physiologically relevant is unclear (PubMed:25484204). The closed form has 3 very narrow channels (1.3 Angstrom at their narrowest) per trimer lined by acidic and aromatic residues; 2 ethanolamine molecules can bind in each channel, on either side of the constriction. Does not bind acetate, ethanol or acetyl phosphate, all of which are small molecules involved in ethanolamine metabolism (PubMed:25752492). Ethanolamine-binding has been hypothesized to stabilize the EutL central pore in a closed (non-transporting) state. An open pore is thought to be large enough to transport ATP and/or cobalamin (Probable).</text>
</comment>
<comment type="subunit">
    <text evidence="2 3 4">Homotrimerizes to form a pseudohexamer.</text>
</comment>
<comment type="subcellular location">
    <subcellularLocation>
        <location evidence="7 8 9">Bacterial microcompartment</location>
    </subcellularLocation>
</comment>
<comment type="domain">
    <text evidence="3 6">Has 2 BMC domains which can evolve independently of each other (Probable). Two ethanolamine molecules bind in the interface between these 2 domains. Ethanolamine 1 binds on the cytoplasmic side, while ethanolamine 2 binds on the lumenal side of the BMC (PubMed:25752492).</text>
</comment>
<comment type="PTM">
    <text evidence="3 10 11">A disulfide bond is seen in native crystals; it disappears upon reduction with tris-(2-carboxyethyl) phosphine, which also reduces the protein's affinity for ethanolamine. It has been suggested to confer redox modulation to pore opening.</text>
</comment>
<comment type="similarity">
    <text evidence="1">Belongs to the EutL/PduB family.</text>
</comment>
<evidence type="ECO:0000255" key="1">
    <source>
        <dbReference type="PROSITE-ProRule" id="PRU01279"/>
    </source>
</evidence>
<evidence type="ECO:0000269" key="2">
    <source>
    </source>
</evidence>
<evidence type="ECO:0000269" key="3">
    <source>
    </source>
</evidence>
<evidence type="ECO:0000269" key="4">
    <source>
    </source>
</evidence>
<evidence type="ECO:0000303" key="5">
    <source>
    </source>
</evidence>
<evidence type="ECO:0000305" key="6"/>
<evidence type="ECO:0000305" key="7">
    <source>
    </source>
</evidence>
<evidence type="ECO:0000305" key="8">
    <source>
    </source>
</evidence>
<evidence type="ECO:0000305" key="9">
    <source>
    </source>
</evidence>
<evidence type="ECO:0007744" key="10">
    <source>
        <dbReference type="PDB" id="4EDI"/>
    </source>
</evidence>
<evidence type="ECO:0007744" key="11">
    <source>
        <dbReference type="PDB" id="4FDZ"/>
    </source>
</evidence>
<evidence type="ECO:0007744" key="12">
    <source>
        <dbReference type="PDB" id="4TLH"/>
    </source>
</evidence>
<evidence type="ECO:0007744" key="13">
    <source>
        <dbReference type="PDB" id="4TM6"/>
    </source>
</evidence>
<evidence type="ECO:0007744" key="14">
    <source>
        <dbReference type="PDB" id="4TME"/>
    </source>
</evidence>
<evidence type="ECO:0007744" key="15">
    <source>
        <dbReference type="PDB" id="4U6I"/>
    </source>
</evidence>
<evidence type="ECO:0007744" key="16">
    <source>
        <dbReference type="PDB" id="6ARC"/>
    </source>
</evidence>
<evidence type="ECO:0007744" key="17">
    <source>
        <dbReference type="PDB" id="6ARD"/>
    </source>
</evidence>
<evidence type="ECO:0007829" key="18">
    <source>
        <dbReference type="PDB" id="4TLH"/>
    </source>
</evidence>
<reference key="1">
    <citation type="journal article" date="2002" name="Proc. Natl. Acad. Sci. U.S.A.">
        <title>Complete genome sequence of Clostridium perfringens, an anaerobic flesh-eater.</title>
        <authorList>
            <person name="Shimizu T."/>
            <person name="Ohtani K."/>
            <person name="Hirakawa H."/>
            <person name="Ohshima K."/>
            <person name="Yamashita A."/>
            <person name="Shiba T."/>
            <person name="Ogasawara N."/>
            <person name="Hattori M."/>
            <person name="Kuhara S."/>
            <person name="Hayashi H."/>
        </authorList>
    </citation>
    <scope>NUCLEOTIDE SEQUENCE [LARGE SCALE GENOMIC DNA]</scope>
    <source>
        <strain>13 / Type A</strain>
    </source>
</reference>
<reference evidence="15" key="2">
    <citation type="journal article" date="2014" name="Acta Crystallogr. F Struct. Biol. Commun.">
        <title>Structure of a bacterial microcompartment shell protein bound to a cobalamin cofactor.</title>
        <authorList>
            <person name="Thompson M.C."/>
            <person name="Crowley C.S."/>
            <person name="Kopstein J."/>
            <person name="Bobik T.A."/>
            <person name="Yeates T.O."/>
        </authorList>
    </citation>
    <scope>X-RAY CRYSTALLOGRAPHY (2.10 ANGSTROMS) IN COMPLEX WITH COBALAMIN IN CLOSED FORM</scope>
    <scope>FUNCTION</scope>
    <scope>SUBUNIT</scope>
    <scope>SUBCELLULAR LOCATION</scope>
    <source>
        <strain>13 / Type A</strain>
    </source>
</reference>
<reference evidence="10 11 13 14" key="3">
    <citation type="journal article" date="2015" name="Protein Sci.">
        <title>An allosteric model for control of pore opening by substrate binding in the EutL microcompartment shell protein.</title>
        <authorList>
            <person name="Thompson M.C."/>
            <person name="Cascio D."/>
            <person name="Leibly D.J."/>
            <person name="Yeates T.O."/>
        </authorList>
    </citation>
    <scope>X-RAY CRYSTALLOGRAPHY (1.70 ANGSTROMS) IN CLOSED FORM; NATIVE AND REDUCED FORMS; IN COMPLEX WITH ETHANOLAMINE</scope>
    <scope>FUNCTION</scope>
    <scope>ETHANOLAMINE-BINDING</scope>
    <scope>SUBUNIT</scope>
    <scope>SUBCELLULAR LOCATION</scope>
    <scope>DISULFIDE BONDS</scope>
    <source>
        <strain>13 / Type A</strain>
    </source>
</reference>
<reference evidence="12 16 17" key="4">
    <citation type="journal article" date="2018" name="Acta Crystallogr. D">
        <title>Microfocus diffraction from different regions of a protein crystal: structural variations and unit-cell polymorphism.</title>
        <authorList>
            <person name="Thompson M.C."/>
            <person name="Cascio D."/>
            <person name="Yeates T.O."/>
        </authorList>
    </citation>
    <scope>X-RAY CRYSTALLOGRAPHY (1.70 ANGSTROMS)</scope>
    <scope>FUNCTION</scope>
    <scope>SUBUNIT</scope>
    <scope>SUBCELLULAR LOCATION</scope>
    <source>
        <strain>13 / Type A</strain>
    </source>
</reference>
<gene>
    <name type="primary">eutL</name>
    <name type="ordered locus">CPE0900</name>
</gene>
<name>EUTL_CLOPE</name>
<sequence length="217" mass="22629">MKNDLIRPNVLSVKIISNVSPEMAKKLELEPHHKSLGLITADCDDVTYTALDEATKAAEVDVVYARSMYAGAGNASTKLAGEVIGILAGPSPAEVRSGLNATLDFIDSGVGFVSANEDDSICYYAQCVSRTGSYLSKTAGIREGEALAYLVAPPLEAMYALDAALKAADVEMCEFFAPPTETNFAGALLTGSQSACKAACDAFAEAVQSVASNPLGF</sequence>
<feature type="chain" id="PRO_0000452913" description="Bacterial microcompartment shell protein EutL">
    <location>
        <begin position="1"/>
        <end position="217"/>
    </location>
</feature>
<feature type="domain" description="BMC circularly permuted 1" evidence="1">
    <location>
        <begin position="1"/>
        <end position="110"/>
    </location>
</feature>
<feature type="domain" description="BMC circularly permuted 2" evidence="1">
    <location>
        <begin position="111"/>
        <end position="217"/>
    </location>
</feature>
<feature type="binding site" description="axial binding residue" evidence="2 15">
    <location>
        <position position="32"/>
    </location>
    <ligand>
        <name>cob(II)alamin</name>
        <dbReference type="ChEBI" id="CHEBI:16304"/>
    </ligand>
    <ligandPart>
        <name>Co</name>
        <dbReference type="ChEBI" id="CHEBI:27638"/>
    </ligandPart>
</feature>
<feature type="binding site" evidence="3 14">
    <location>
        <position position="44"/>
    </location>
    <ligand>
        <name>ethanolamine</name>
        <dbReference type="ChEBI" id="CHEBI:57603"/>
        <label>1</label>
    </ligand>
</feature>
<feature type="binding site" evidence="3 14">
    <location>
        <position position="45"/>
    </location>
    <ligand>
        <name>ethanolamine</name>
        <dbReference type="ChEBI" id="CHEBI:57603"/>
        <label>2</label>
    </ligand>
</feature>
<feature type="binding site" evidence="3 14">
    <location>
        <position position="82"/>
    </location>
    <ligand>
        <name>ethanolamine</name>
        <dbReference type="ChEBI" id="CHEBI:57603"/>
        <label>1</label>
    </ligand>
</feature>
<feature type="binding site" evidence="3 14">
    <location>
        <position position="112"/>
    </location>
    <ligand>
        <name>ethanolamine</name>
        <dbReference type="ChEBI" id="CHEBI:57603"/>
        <label>1</label>
    </ligand>
</feature>
<feature type="binding site" evidence="3 14">
    <location>
        <position position="176"/>
    </location>
    <ligand>
        <name>ethanolamine</name>
        <dbReference type="ChEBI" id="CHEBI:57603"/>
        <label>2</label>
    </ligand>
</feature>
<feature type="binding site" evidence="3 14">
    <location>
        <position position="180"/>
    </location>
    <ligand>
        <name>ethanolamine</name>
        <dbReference type="ChEBI" id="CHEBI:57603"/>
        <label>2</label>
    </ligand>
</feature>
<feature type="binding site" evidence="14">
    <location>
        <begin position="182"/>
        <end position="184"/>
    </location>
    <ligand>
        <name>ethanolamine</name>
        <dbReference type="ChEBI" id="CHEBI:57603"/>
        <label>1</label>
    </ligand>
</feature>
<feature type="binding site" evidence="3 14">
    <location>
        <position position="184"/>
    </location>
    <ligand>
        <name>ethanolamine</name>
        <dbReference type="ChEBI" id="CHEBI:57603"/>
        <label>1</label>
    </ligand>
</feature>
<feature type="site" description="Important for gating" evidence="8">
    <location>
        <position position="69"/>
    </location>
</feature>
<feature type="site" description="Important for gating" evidence="8">
    <location>
        <position position="74"/>
    </location>
</feature>
<feature type="site" description="Important for gating" evidence="8">
    <location>
        <position position="183"/>
    </location>
</feature>
<feature type="disulfide bond" evidence="3 10">
    <location>
        <begin position="127"/>
        <end position="200"/>
    </location>
</feature>
<feature type="strand" evidence="18">
    <location>
        <begin position="10"/>
        <end position="18"/>
    </location>
</feature>
<feature type="helix" evidence="18">
    <location>
        <begin position="21"/>
        <end position="26"/>
    </location>
</feature>
<feature type="strand" evidence="18">
    <location>
        <begin position="35"/>
        <end position="42"/>
    </location>
</feature>
<feature type="helix" evidence="18">
    <location>
        <begin position="44"/>
        <end position="57"/>
    </location>
</feature>
<feature type="strand" evidence="18">
    <location>
        <begin position="61"/>
        <end position="67"/>
    </location>
</feature>
<feature type="helix" evidence="18">
    <location>
        <begin position="72"/>
        <end position="74"/>
    </location>
</feature>
<feature type="turn" evidence="18">
    <location>
        <begin position="78"/>
        <end position="82"/>
    </location>
</feature>
<feature type="strand" evidence="18">
    <location>
        <begin position="83"/>
        <end position="91"/>
    </location>
</feature>
<feature type="helix" evidence="18">
    <location>
        <begin position="92"/>
        <end position="106"/>
    </location>
</feature>
<feature type="turn" evidence="18">
    <location>
        <begin position="107"/>
        <end position="109"/>
    </location>
</feature>
<feature type="strand" evidence="18">
    <location>
        <begin position="112"/>
        <end position="114"/>
    </location>
</feature>
<feature type="strand" evidence="18">
    <location>
        <begin position="121"/>
        <end position="130"/>
    </location>
</feature>
<feature type="helix" evidence="18">
    <location>
        <begin position="133"/>
        <end position="139"/>
    </location>
</feature>
<feature type="strand" evidence="18">
    <location>
        <begin position="146"/>
        <end position="152"/>
    </location>
</feature>
<feature type="helix" evidence="18">
    <location>
        <begin position="154"/>
        <end position="167"/>
    </location>
</feature>
<feature type="strand" evidence="18">
    <location>
        <begin position="171"/>
        <end position="176"/>
    </location>
</feature>
<feature type="strand" evidence="18">
    <location>
        <begin position="185"/>
        <end position="191"/>
    </location>
</feature>
<feature type="helix" evidence="18">
    <location>
        <begin position="193"/>
        <end position="211"/>
    </location>
</feature>
<proteinExistence type="evidence at protein level"/>
<organism>
    <name type="scientific">Clostridium perfringens (strain 13 / Type A)</name>
    <dbReference type="NCBI Taxonomy" id="195102"/>
    <lineage>
        <taxon>Bacteria</taxon>
        <taxon>Bacillati</taxon>
        <taxon>Bacillota</taxon>
        <taxon>Clostridia</taxon>
        <taxon>Eubacteriales</taxon>
        <taxon>Clostridiaceae</taxon>
        <taxon>Clostridium</taxon>
    </lineage>
</organism>
<accession>Q8XLZ0</accession>
<protein>
    <recommendedName>
        <fullName>Bacterial microcompartment shell protein EutL</fullName>
    </recommendedName>
    <alternativeName>
        <fullName evidence="6">BMC-T</fullName>
    </alternativeName>
    <alternativeName>
        <fullName>Ethanolamine utilization protein EutL</fullName>
    </alternativeName>
    <alternativeName>
        <fullName evidence="5">EutL microcompartment shell protein</fullName>
    </alternativeName>
</protein>
<dbReference type="EMBL" id="BA000016">
    <property type="protein sequence ID" value="BAB80606.1"/>
    <property type="molecule type" value="Genomic_DNA"/>
</dbReference>
<dbReference type="RefSeq" id="WP_003461990.1">
    <property type="nucleotide sequence ID" value="NC_003366.1"/>
</dbReference>
<dbReference type="PDB" id="4EDI">
    <property type="method" value="X-ray"/>
    <property type="resolution" value="2.00 A"/>
    <property type="chains" value="A/B/C=1-217"/>
</dbReference>
<dbReference type="PDB" id="4FDZ">
    <property type="method" value="X-ray"/>
    <property type="resolution" value="1.80 A"/>
    <property type="chains" value="A/B/C=1-217"/>
</dbReference>
<dbReference type="PDB" id="4TLH">
    <property type="method" value="X-ray"/>
    <property type="resolution" value="1.70 A"/>
    <property type="chains" value="A/B/C=1-217"/>
</dbReference>
<dbReference type="PDB" id="4TM6">
    <property type="method" value="X-ray"/>
    <property type="resolution" value="1.90 A"/>
    <property type="chains" value="A/B/C=1-217"/>
</dbReference>
<dbReference type="PDB" id="4TME">
    <property type="method" value="X-ray"/>
    <property type="resolution" value="1.70 A"/>
    <property type="chains" value="A/B/C=1-217"/>
</dbReference>
<dbReference type="PDB" id="4U6I">
    <property type="method" value="X-ray"/>
    <property type="resolution" value="2.10 A"/>
    <property type="chains" value="A/B/C=1-217"/>
</dbReference>
<dbReference type="PDB" id="6ARC">
    <property type="method" value="X-ray"/>
    <property type="resolution" value="1.90 A"/>
    <property type="chains" value="A/B/C=1-217"/>
</dbReference>
<dbReference type="PDB" id="6ARD">
    <property type="method" value="X-ray"/>
    <property type="resolution" value="2.00 A"/>
    <property type="chains" value="A/B/C=1-217"/>
</dbReference>
<dbReference type="PDBsum" id="4EDI"/>
<dbReference type="PDBsum" id="4FDZ"/>
<dbReference type="PDBsum" id="4TLH"/>
<dbReference type="PDBsum" id="4TM6"/>
<dbReference type="PDBsum" id="4TME"/>
<dbReference type="PDBsum" id="4U6I"/>
<dbReference type="PDBsum" id="6ARC"/>
<dbReference type="PDBsum" id="6ARD"/>
<dbReference type="SMR" id="Q8XLZ0"/>
<dbReference type="STRING" id="195102.gene:10490163"/>
<dbReference type="GeneID" id="93002775"/>
<dbReference type="KEGG" id="cpe:CPE0900"/>
<dbReference type="HOGENOM" id="CLU_1270774_0_0_9"/>
<dbReference type="EvolutionaryTrace" id="Q8XLZ0"/>
<dbReference type="Proteomes" id="UP000000818">
    <property type="component" value="Chromosome"/>
</dbReference>
<dbReference type="GO" id="GO:0031469">
    <property type="term" value="C:bacterial microcompartment"/>
    <property type="evidence" value="ECO:0007669"/>
    <property type="project" value="UniProtKB-SubCell"/>
</dbReference>
<dbReference type="GO" id="GO:0031419">
    <property type="term" value="F:cobalamin binding"/>
    <property type="evidence" value="ECO:0007669"/>
    <property type="project" value="UniProtKB-KW"/>
</dbReference>
<dbReference type="GO" id="GO:0046872">
    <property type="term" value="F:metal ion binding"/>
    <property type="evidence" value="ECO:0007669"/>
    <property type="project" value="UniProtKB-KW"/>
</dbReference>
<dbReference type="GO" id="GO:0005198">
    <property type="term" value="F:structural molecule activity"/>
    <property type="evidence" value="ECO:0007669"/>
    <property type="project" value="InterPro"/>
</dbReference>
<dbReference type="CDD" id="cd07049">
    <property type="entry name" value="BMC_EutL_repeat1"/>
    <property type="match status" value="1"/>
</dbReference>
<dbReference type="CDD" id="cd07050">
    <property type="entry name" value="BMC_EutL_repeat2"/>
    <property type="match status" value="1"/>
</dbReference>
<dbReference type="Gene3D" id="3.30.70.1710">
    <property type="match status" value="2"/>
</dbReference>
<dbReference type="InterPro" id="IPR044870">
    <property type="entry name" value="BMC_CP"/>
</dbReference>
<dbReference type="InterPro" id="IPR000249">
    <property type="entry name" value="BMC_dom"/>
</dbReference>
<dbReference type="InterPro" id="IPR037233">
    <property type="entry name" value="CcmK-like_sf"/>
</dbReference>
<dbReference type="InterPro" id="IPR030983">
    <property type="entry name" value="EutL"/>
</dbReference>
<dbReference type="InterPro" id="IPR009193">
    <property type="entry name" value="EutL_PduB"/>
</dbReference>
<dbReference type="NCBIfam" id="TIGR04502">
    <property type="entry name" value="microcomp_EutL"/>
    <property type="match status" value="1"/>
</dbReference>
<dbReference type="NCBIfam" id="NF011934">
    <property type="entry name" value="PRK15405.1"/>
    <property type="match status" value="1"/>
</dbReference>
<dbReference type="Pfam" id="PF00936">
    <property type="entry name" value="BMC"/>
    <property type="match status" value="2"/>
</dbReference>
<dbReference type="PIRSF" id="PIRSF012290">
    <property type="entry name" value="EutL_PduB"/>
    <property type="match status" value="1"/>
</dbReference>
<dbReference type="SMART" id="SM00877">
    <property type="entry name" value="BMC"/>
    <property type="match status" value="2"/>
</dbReference>
<dbReference type="SUPFAM" id="SSF143414">
    <property type="entry name" value="CcmK-like"/>
    <property type="match status" value="1"/>
</dbReference>
<dbReference type="PROSITE" id="PS51931">
    <property type="entry name" value="BMC_CP"/>
    <property type="match status" value="2"/>
</dbReference>